<comment type="function">
    <text evidence="1">Binds together with bS18 to 16S ribosomal RNA.</text>
</comment>
<comment type="similarity">
    <text evidence="1">Belongs to the bacterial ribosomal protein bS6 family.</text>
</comment>
<reference key="1">
    <citation type="journal article" date="2007" name="PLoS ONE">
        <title>Analysis of the neurotoxin complex genes in Clostridium botulinum A1-A4 and B1 strains: BoNT/A3, /Ba4 and /B1 clusters are located within plasmids.</title>
        <authorList>
            <person name="Smith T.J."/>
            <person name="Hill K.K."/>
            <person name="Foley B.T."/>
            <person name="Detter J.C."/>
            <person name="Munk A.C."/>
            <person name="Bruce D.C."/>
            <person name="Doggett N.A."/>
            <person name="Smith L.A."/>
            <person name="Marks J.D."/>
            <person name="Xie G."/>
            <person name="Brettin T.S."/>
        </authorList>
    </citation>
    <scope>NUCLEOTIDE SEQUENCE [LARGE SCALE GENOMIC DNA]</scope>
    <source>
        <strain>ATCC 19397 / Type A</strain>
    </source>
</reference>
<sequence length="94" mass="10936">MRKYETVFILNPTLDEEGYKANVEKFKGVIENAGGTVDNVDLWGKRKLAYEVKKVSEGYYTLMNFTADTELPKELDRVFRITDTVIRHMIITQE</sequence>
<name>RS6_CLOB1</name>
<proteinExistence type="inferred from homology"/>
<gene>
    <name evidence="1" type="primary">rpsF</name>
    <name type="ordered locus">CLB_3721</name>
</gene>
<evidence type="ECO:0000255" key="1">
    <source>
        <dbReference type="HAMAP-Rule" id="MF_00360"/>
    </source>
</evidence>
<evidence type="ECO:0000305" key="2"/>
<protein>
    <recommendedName>
        <fullName evidence="1">Small ribosomal subunit protein bS6</fullName>
    </recommendedName>
    <alternativeName>
        <fullName evidence="2">30S ribosomal protein S6</fullName>
    </alternativeName>
</protein>
<feature type="chain" id="PRO_1000005247" description="Small ribosomal subunit protein bS6">
    <location>
        <begin position="1"/>
        <end position="94"/>
    </location>
</feature>
<accession>A7FZH1</accession>
<keyword id="KW-0687">Ribonucleoprotein</keyword>
<keyword id="KW-0689">Ribosomal protein</keyword>
<keyword id="KW-0694">RNA-binding</keyword>
<keyword id="KW-0699">rRNA-binding</keyword>
<organism>
    <name type="scientific">Clostridium botulinum (strain ATCC 19397 / Type A)</name>
    <dbReference type="NCBI Taxonomy" id="441770"/>
    <lineage>
        <taxon>Bacteria</taxon>
        <taxon>Bacillati</taxon>
        <taxon>Bacillota</taxon>
        <taxon>Clostridia</taxon>
        <taxon>Eubacteriales</taxon>
        <taxon>Clostridiaceae</taxon>
        <taxon>Clostridium</taxon>
    </lineage>
</organism>
<dbReference type="EMBL" id="CP000726">
    <property type="protein sequence ID" value="ABS35865.1"/>
    <property type="molecule type" value="Genomic_DNA"/>
</dbReference>
<dbReference type="RefSeq" id="WP_012048444.1">
    <property type="nucleotide sequence ID" value="NC_009697.1"/>
</dbReference>
<dbReference type="SMR" id="A7FZH1"/>
<dbReference type="GeneID" id="5187884"/>
<dbReference type="KEGG" id="cba:CLB_3721"/>
<dbReference type="HOGENOM" id="CLU_113441_5_1_9"/>
<dbReference type="GO" id="GO:0005737">
    <property type="term" value="C:cytoplasm"/>
    <property type="evidence" value="ECO:0007669"/>
    <property type="project" value="UniProtKB-ARBA"/>
</dbReference>
<dbReference type="GO" id="GO:1990904">
    <property type="term" value="C:ribonucleoprotein complex"/>
    <property type="evidence" value="ECO:0007669"/>
    <property type="project" value="UniProtKB-KW"/>
</dbReference>
<dbReference type="GO" id="GO:0005840">
    <property type="term" value="C:ribosome"/>
    <property type="evidence" value="ECO:0007669"/>
    <property type="project" value="UniProtKB-KW"/>
</dbReference>
<dbReference type="GO" id="GO:0070181">
    <property type="term" value="F:small ribosomal subunit rRNA binding"/>
    <property type="evidence" value="ECO:0007669"/>
    <property type="project" value="TreeGrafter"/>
</dbReference>
<dbReference type="GO" id="GO:0003735">
    <property type="term" value="F:structural constituent of ribosome"/>
    <property type="evidence" value="ECO:0007669"/>
    <property type="project" value="InterPro"/>
</dbReference>
<dbReference type="GO" id="GO:0006412">
    <property type="term" value="P:translation"/>
    <property type="evidence" value="ECO:0007669"/>
    <property type="project" value="UniProtKB-UniRule"/>
</dbReference>
<dbReference type="CDD" id="cd00473">
    <property type="entry name" value="bS6"/>
    <property type="match status" value="1"/>
</dbReference>
<dbReference type="FunFam" id="3.30.70.60:FF:000002">
    <property type="entry name" value="30S ribosomal protein S6"/>
    <property type="match status" value="1"/>
</dbReference>
<dbReference type="Gene3D" id="3.30.70.60">
    <property type="match status" value="1"/>
</dbReference>
<dbReference type="HAMAP" id="MF_00360">
    <property type="entry name" value="Ribosomal_bS6"/>
    <property type="match status" value="1"/>
</dbReference>
<dbReference type="InterPro" id="IPR000529">
    <property type="entry name" value="Ribosomal_bS6"/>
</dbReference>
<dbReference type="InterPro" id="IPR035980">
    <property type="entry name" value="Ribosomal_bS6_sf"/>
</dbReference>
<dbReference type="InterPro" id="IPR020814">
    <property type="entry name" value="Ribosomal_S6_plastid/chlpt"/>
</dbReference>
<dbReference type="InterPro" id="IPR014717">
    <property type="entry name" value="Transl_elong_EF1B/ribsomal_bS6"/>
</dbReference>
<dbReference type="NCBIfam" id="TIGR00166">
    <property type="entry name" value="S6"/>
    <property type="match status" value="1"/>
</dbReference>
<dbReference type="PANTHER" id="PTHR21011">
    <property type="entry name" value="MITOCHONDRIAL 28S RIBOSOMAL PROTEIN S6"/>
    <property type="match status" value="1"/>
</dbReference>
<dbReference type="PANTHER" id="PTHR21011:SF1">
    <property type="entry name" value="SMALL RIBOSOMAL SUBUNIT PROTEIN BS6M"/>
    <property type="match status" value="1"/>
</dbReference>
<dbReference type="Pfam" id="PF01250">
    <property type="entry name" value="Ribosomal_S6"/>
    <property type="match status" value="1"/>
</dbReference>
<dbReference type="SUPFAM" id="SSF54995">
    <property type="entry name" value="Ribosomal protein S6"/>
    <property type="match status" value="1"/>
</dbReference>